<gene>
    <name type="primary">ptsH</name>
    <name type="ordered locus">VC_0966</name>
</gene>
<accession>Q9KTD6</accession>
<dbReference type="EMBL" id="AE003852">
    <property type="protein sequence ID" value="AAF94128.1"/>
    <property type="molecule type" value="Genomic_DNA"/>
</dbReference>
<dbReference type="PIR" id="A82258">
    <property type="entry name" value="A82258"/>
</dbReference>
<dbReference type="RefSeq" id="NP_230613.1">
    <property type="nucleotide sequence ID" value="NC_002505.1"/>
</dbReference>
<dbReference type="RefSeq" id="WP_000273061.1">
    <property type="nucleotide sequence ID" value="NZ_LT906614.1"/>
</dbReference>
<dbReference type="PDB" id="7X7H">
    <property type="method" value="X-ray"/>
    <property type="resolution" value="2.00 A"/>
    <property type="chains" value="B/D=2-85"/>
</dbReference>
<dbReference type="PDBsum" id="7X7H"/>
<dbReference type="SMR" id="Q9KTD6"/>
<dbReference type="STRING" id="243277.VC_0966"/>
<dbReference type="DNASU" id="2614219"/>
<dbReference type="EnsemblBacteria" id="AAF94128">
    <property type="protein sequence ID" value="AAF94128"/>
    <property type="gene ID" value="VC_0966"/>
</dbReference>
<dbReference type="KEGG" id="vch:VC_0966"/>
<dbReference type="PATRIC" id="fig|243277.26.peg.920"/>
<dbReference type="eggNOG" id="COG1925">
    <property type="taxonomic scope" value="Bacteria"/>
</dbReference>
<dbReference type="HOGENOM" id="CLU_136230_2_3_6"/>
<dbReference type="Proteomes" id="UP000000584">
    <property type="component" value="Chromosome 1"/>
</dbReference>
<dbReference type="GO" id="GO:0005737">
    <property type="term" value="C:cytoplasm"/>
    <property type="evidence" value="ECO:0007669"/>
    <property type="project" value="UniProtKB-SubCell"/>
</dbReference>
<dbReference type="GO" id="GO:0009401">
    <property type="term" value="P:phosphoenolpyruvate-dependent sugar phosphotransferase system"/>
    <property type="evidence" value="ECO:0000318"/>
    <property type="project" value="GO_Central"/>
</dbReference>
<dbReference type="CDD" id="cd00367">
    <property type="entry name" value="PTS-HPr_like"/>
    <property type="match status" value="1"/>
</dbReference>
<dbReference type="FunFam" id="3.30.1340.10:FF:000001">
    <property type="entry name" value="Phosphocarrier, HPr family"/>
    <property type="match status" value="1"/>
</dbReference>
<dbReference type="Gene3D" id="3.30.1340.10">
    <property type="entry name" value="HPr-like"/>
    <property type="match status" value="1"/>
</dbReference>
<dbReference type="InterPro" id="IPR050399">
    <property type="entry name" value="HPr"/>
</dbReference>
<dbReference type="InterPro" id="IPR000032">
    <property type="entry name" value="HPr-like"/>
</dbReference>
<dbReference type="InterPro" id="IPR035895">
    <property type="entry name" value="HPr-like_sf"/>
</dbReference>
<dbReference type="InterPro" id="IPR001020">
    <property type="entry name" value="PTS_HPr_His_P_site"/>
</dbReference>
<dbReference type="InterPro" id="IPR002114">
    <property type="entry name" value="PTS_HPr_Ser_P_site"/>
</dbReference>
<dbReference type="NCBIfam" id="TIGR01003">
    <property type="entry name" value="PTS_HPr_family"/>
    <property type="match status" value="1"/>
</dbReference>
<dbReference type="PANTHER" id="PTHR33705">
    <property type="entry name" value="PHOSPHOCARRIER PROTEIN HPR"/>
    <property type="match status" value="1"/>
</dbReference>
<dbReference type="PANTHER" id="PTHR33705:SF1">
    <property type="entry name" value="PHOSPHOCARRIER PROTEIN HPR"/>
    <property type="match status" value="1"/>
</dbReference>
<dbReference type="Pfam" id="PF00381">
    <property type="entry name" value="PTS-HPr"/>
    <property type="match status" value="1"/>
</dbReference>
<dbReference type="PRINTS" id="PR00107">
    <property type="entry name" value="PHOSPHOCPHPR"/>
</dbReference>
<dbReference type="SUPFAM" id="SSF55594">
    <property type="entry name" value="HPr-like"/>
    <property type="match status" value="1"/>
</dbReference>
<dbReference type="PROSITE" id="PS51350">
    <property type="entry name" value="PTS_HPR_DOM"/>
    <property type="match status" value="1"/>
</dbReference>
<dbReference type="PROSITE" id="PS00369">
    <property type="entry name" value="PTS_HPR_HIS"/>
    <property type="match status" value="1"/>
</dbReference>
<dbReference type="PROSITE" id="PS00589">
    <property type="entry name" value="PTS_HPR_SER"/>
    <property type="match status" value="1"/>
</dbReference>
<feature type="chain" id="PRO_0000107886" description="Phosphocarrier protein HPr">
    <location>
        <begin position="1"/>
        <end position="85"/>
    </location>
</feature>
<feature type="domain" description="HPr" evidence="2">
    <location>
        <begin position="1"/>
        <end position="85"/>
    </location>
</feature>
<feature type="active site" description="Pros-phosphohistidine intermediate" evidence="2">
    <location>
        <position position="15"/>
    </location>
</feature>
<feature type="strand" evidence="4">
    <location>
        <begin position="2"/>
        <end position="7"/>
    </location>
</feature>
<feature type="helix" evidence="4">
    <location>
        <begin position="16"/>
        <end position="27"/>
    </location>
</feature>
<feature type="strand" evidence="4">
    <location>
        <begin position="29"/>
        <end position="37"/>
    </location>
</feature>
<feature type="strand" evidence="4">
    <location>
        <begin position="40"/>
        <end position="43"/>
    </location>
</feature>
<feature type="helix" evidence="4">
    <location>
        <begin position="47"/>
        <end position="50"/>
    </location>
</feature>
<feature type="strand" evidence="4">
    <location>
        <begin position="60"/>
        <end position="67"/>
    </location>
</feature>
<feature type="helix" evidence="4">
    <location>
        <begin position="70"/>
        <end position="83"/>
    </location>
</feature>
<proteinExistence type="evidence at protein level"/>
<name>PTHP_VIBCH</name>
<comment type="function">
    <text evidence="1">General (non sugar-specific) component of the phosphoenolpyruvate-dependent sugar phosphotransferase system (sugar PTS). This major carbohydrate active-transport system catalyzes the phosphorylation of incoming sugar substrates concomitantly with their translocation across the cell membrane. The phosphoryl group from phosphoenolpyruvate (PEP) is transferred to the phosphoryl carrier protein HPr by enzyme I. Phospho-HPr then transfers it to the PTS EIIA domain.</text>
</comment>
<comment type="subcellular location">
    <subcellularLocation>
        <location evidence="1">Cytoplasm</location>
    </subcellularLocation>
</comment>
<comment type="similarity">
    <text evidence="3">Belongs to the HPr family.</text>
</comment>
<reference key="1">
    <citation type="journal article" date="2000" name="Nature">
        <title>DNA sequence of both chromosomes of the cholera pathogen Vibrio cholerae.</title>
        <authorList>
            <person name="Heidelberg J.F."/>
            <person name="Eisen J.A."/>
            <person name="Nelson W.C."/>
            <person name="Clayton R.A."/>
            <person name="Gwinn M.L."/>
            <person name="Dodson R.J."/>
            <person name="Haft D.H."/>
            <person name="Hickey E.K."/>
            <person name="Peterson J.D."/>
            <person name="Umayam L.A."/>
            <person name="Gill S.R."/>
            <person name="Nelson K.E."/>
            <person name="Read T.D."/>
            <person name="Tettelin H."/>
            <person name="Richardson D.L."/>
            <person name="Ermolaeva M.D."/>
            <person name="Vamathevan J.J."/>
            <person name="Bass S."/>
            <person name="Qin H."/>
            <person name="Dragoi I."/>
            <person name="Sellers P."/>
            <person name="McDonald L.A."/>
            <person name="Utterback T.R."/>
            <person name="Fleischmann R.D."/>
            <person name="Nierman W.C."/>
            <person name="White O."/>
            <person name="Salzberg S.L."/>
            <person name="Smith H.O."/>
            <person name="Colwell R.R."/>
            <person name="Mekalanos J.J."/>
            <person name="Venter J.C."/>
            <person name="Fraser C.M."/>
        </authorList>
    </citation>
    <scope>NUCLEOTIDE SEQUENCE [LARGE SCALE GENOMIC DNA]</scope>
    <source>
        <strain>ATCC 39315 / El Tor Inaba N16961</strain>
    </source>
</reference>
<organism>
    <name type="scientific">Vibrio cholerae serotype O1 (strain ATCC 39315 / El Tor Inaba N16961)</name>
    <dbReference type="NCBI Taxonomy" id="243277"/>
    <lineage>
        <taxon>Bacteria</taxon>
        <taxon>Pseudomonadati</taxon>
        <taxon>Pseudomonadota</taxon>
        <taxon>Gammaproteobacteria</taxon>
        <taxon>Vibrionales</taxon>
        <taxon>Vibrionaceae</taxon>
        <taxon>Vibrio</taxon>
    </lineage>
</organism>
<protein>
    <recommendedName>
        <fullName>Phosphocarrier protein HPr</fullName>
    </recommendedName>
    <alternativeName>
        <fullName>Histidine-containing protein</fullName>
    </alternativeName>
</protein>
<evidence type="ECO:0000250" key="1"/>
<evidence type="ECO:0000255" key="2">
    <source>
        <dbReference type="PROSITE-ProRule" id="PRU00681"/>
    </source>
</evidence>
<evidence type="ECO:0000305" key="3"/>
<evidence type="ECO:0007829" key="4">
    <source>
        <dbReference type="PDB" id="7X7H"/>
    </source>
</evidence>
<sequence>MYEKQVEITAENGLHTRPAAQFVKEAKAFDADITVTSNGKSASAKSLFKLQTLGLVKGTVVTISAEGPQAKEAVEHLVALMDQLH</sequence>
<keyword id="KW-0002">3D-structure</keyword>
<keyword id="KW-0963">Cytoplasm</keyword>
<keyword id="KW-0598">Phosphotransferase system</keyword>
<keyword id="KW-1185">Reference proteome</keyword>
<keyword id="KW-0762">Sugar transport</keyword>
<keyword id="KW-0813">Transport</keyword>